<name>S2536_CHICK</name>
<reference key="1">
    <citation type="journal article" date="2005" name="Genome Biol.">
        <title>Full-length cDNAs from chicken bursal lymphocytes to facilitate gene function analysis.</title>
        <authorList>
            <person name="Caldwell R.B."/>
            <person name="Kierzek A.M."/>
            <person name="Arakawa H."/>
            <person name="Bezzubov Y."/>
            <person name="Zaim J."/>
            <person name="Fiedler P."/>
            <person name="Kutter S."/>
            <person name="Blagodatski A."/>
            <person name="Kostovska D."/>
            <person name="Koter M."/>
            <person name="Plachy J."/>
            <person name="Carninci P."/>
            <person name="Hayashizaki Y."/>
            <person name="Buerstedde J.-M."/>
        </authorList>
    </citation>
    <scope>NUCLEOTIDE SEQUENCE [LARGE SCALE MRNA]</scope>
    <source>
        <strain>CB</strain>
        <tissue>Bursa of Fabricius</tissue>
    </source>
</reference>
<keyword id="KW-0472">Membrane</keyword>
<keyword id="KW-0496">Mitochondrion</keyword>
<keyword id="KW-0999">Mitochondrion inner membrane</keyword>
<keyword id="KW-1185">Reference proteome</keyword>
<keyword id="KW-0677">Repeat</keyword>
<keyword id="KW-0812">Transmembrane</keyword>
<keyword id="KW-1133">Transmembrane helix</keyword>
<keyword id="KW-0813">Transport</keyword>
<protein>
    <recommendedName>
        <fullName>Solute carrier family 25 member 36</fullName>
    </recommendedName>
</protein>
<evidence type="ECO:0000250" key="1">
    <source>
        <dbReference type="UniProtKB" id="Q96CQ1"/>
    </source>
</evidence>
<evidence type="ECO:0000255" key="2"/>
<evidence type="ECO:0000305" key="3"/>
<accession>Q5ZKP7</accession>
<proteinExistence type="evidence at transcript level"/>
<organism>
    <name type="scientific">Gallus gallus</name>
    <name type="common">Chicken</name>
    <dbReference type="NCBI Taxonomy" id="9031"/>
    <lineage>
        <taxon>Eukaryota</taxon>
        <taxon>Metazoa</taxon>
        <taxon>Chordata</taxon>
        <taxon>Craniata</taxon>
        <taxon>Vertebrata</taxon>
        <taxon>Euteleostomi</taxon>
        <taxon>Archelosauria</taxon>
        <taxon>Archosauria</taxon>
        <taxon>Dinosauria</taxon>
        <taxon>Saurischia</taxon>
        <taxon>Theropoda</taxon>
        <taxon>Coelurosauria</taxon>
        <taxon>Aves</taxon>
        <taxon>Neognathae</taxon>
        <taxon>Galloanserae</taxon>
        <taxon>Galliformes</taxon>
        <taxon>Phasianidae</taxon>
        <taxon>Phasianinae</taxon>
        <taxon>Gallus</taxon>
    </lineage>
</organism>
<comment type="function">
    <text evidence="1">Mitochondrial transporter that imports/exports pyrimidine nucleotides into and from mitochondria. Transports preferentially cytosine and uracil (deoxy)nucleoside mono-, di-, and triphosphates by uniport and antiport mechanism.</text>
</comment>
<comment type="subcellular location">
    <subcellularLocation>
        <location evidence="1">Mitochondrion inner membrane</location>
        <topology evidence="2">Multi-pass membrane protein</topology>
    </subcellularLocation>
</comment>
<comment type="similarity">
    <text evidence="3">Belongs to the mitochondrial carrier (TC 2.A.29) family.</text>
</comment>
<feature type="chain" id="PRO_0000291799" description="Solute carrier family 25 member 36">
    <location>
        <begin position="1"/>
        <end position="313"/>
    </location>
</feature>
<feature type="transmembrane region" description="Helical; Name=1" evidence="2">
    <location>
        <begin position="7"/>
        <end position="27"/>
    </location>
</feature>
<feature type="transmembrane region" description="Helical; Name=2" evidence="2">
    <location>
        <begin position="41"/>
        <end position="57"/>
    </location>
</feature>
<feature type="transmembrane region" description="Helical; Name=3" evidence="2">
    <location>
        <begin position="113"/>
        <end position="133"/>
    </location>
</feature>
<feature type="transmembrane region" description="Helical; Name=4" evidence="2">
    <location>
        <begin position="182"/>
        <end position="202"/>
    </location>
</feature>
<feature type="transmembrane region" description="Helical; Name=5" evidence="2">
    <location>
        <begin position="228"/>
        <end position="248"/>
    </location>
</feature>
<feature type="transmembrane region" description="Helical; Name=6" evidence="2">
    <location>
        <begin position="293"/>
        <end position="313"/>
    </location>
</feature>
<feature type="repeat" description="Solcar 1">
    <location>
        <begin position="4"/>
        <end position="110"/>
    </location>
</feature>
<feature type="repeat" description="Solcar 2">
    <location>
        <begin position="118"/>
        <end position="205"/>
    </location>
</feature>
<feature type="repeat" description="Solcar 3">
    <location>
        <begin position="226"/>
        <end position="310"/>
    </location>
</feature>
<sequence>MSQRDTLVHLFAGGCGGTVGAILTCPLEVVKTRLQSSSVTLYISEVHLNTVNGASVNRVTRVSPGPLHCLKMILQKEGPRSLFRGLGPNLVGVAPSRAIYFAAYSNCKEKLNNIFNPDSTQVHMISAGVAGFTAITMTNPIWLVKTRLQLDARNRGEKRMSAFECVRKVYRSDGIKGFYRGMSASYAGISETVIHFVIYESIKRKLLEHKTASAMDSEDESAKEASDFVGMMMAAATSKTCATSIAYPHEVVRTRLREEGTKYRSFFQTLSLLVREEGYGSLYRGLTTHLVRQIPNTAIMMSTYEVVVYLLDG</sequence>
<gene>
    <name type="primary">SLC25A36</name>
    <name type="ORF">RCJMB04_9m7</name>
</gene>
<dbReference type="EMBL" id="AJ720037">
    <property type="protein sequence ID" value="CAG31696.1"/>
    <property type="molecule type" value="mRNA"/>
</dbReference>
<dbReference type="RefSeq" id="NP_001007961.1">
    <property type="nucleotide sequence ID" value="NM_001007960.2"/>
</dbReference>
<dbReference type="SMR" id="Q5ZKP7"/>
<dbReference type="FunCoup" id="Q5ZKP7">
    <property type="interactions" value="2487"/>
</dbReference>
<dbReference type="STRING" id="9031.ENSGALP00000008458"/>
<dbReference type="PaxDb" id="9031-ENSGALP00000008458"/>
<dbReference type="Ensembl" id="ENSGALT00010061808.1">
    <property type="protein sequence ID" value="ENSGALP00010038152.1"/>
    <property type="gene ID" value="ENSGALG00010025316.1"/>
</dbReference>
<dbReference type="GeneID" id="424817"/>
<dbReference type="KEGG" id="gga:424817"/>
<dbReference type="CTD" id="55186"/>
<dbReference type="VEuPathDB" id="HostDB:geneid_424817"/>
<dbReference type="eggNOG" id="KOG0757">
    <property type="taxonomic scope" value="Eukaryota"/>
</dbReference>
<dbReference type="GeneTree" id="ENSGT00940000154369"/>
<dbReference type="HOGENOM" id="CLU_015166_6_0_1"/>
<dbReference type="InParanoid" id="Q5ZKP7"/>
<dbReference type="OMA" id="WVMYEQM"/>
<dbReference type="OrthoDB" id="269120at2759"/>
<dbReference type="PhylomeDB" id="Q5ZKP7"/>
<dbReference type="TreeFam" id="TF314220"/>
<dbReference type="PRO" id="PR:Q5ZKP7"/>
<dbReference type="Proteomes" id="UP000000539">
    <property type="component" value="Chromosome 9"/>
</dbReference>
<dbReference type="Bgee" id="ENSGALG00000005283">
    <property type="expression patterns" value="Expressed in spermatid and 12 other cell types or tissues"/>
</dbReference>
<dbReference type="GO" id="GO:0005743">
    <property type="term" value="C:mitochondrial inner membrane"/>
    <property type="evidence" value="ECO:0007669"/>
    <property type="project" value="UniProtKB-SubCell"/>
</dbReference>
<dbReference type="GO" id="GO:0005739">
    <property type="term" value="C:mitochondrion"/>
    <property type="evidence" value="ECO:0000318"/>
    <property type="project" value="GO_Central"/>
</dbReference>
<dbReference type="GO" id="GO:0015218">
    <property type="term" value="F:pyrimidine nucleotide transmembrane transporter activity"/>
    <property type="evidence" value="ECO:0000318"/>
    <property type="project" value="GO_Central"/>
</dbReference>
<dbReference type="GO" id="GO:0000002">
    <property type="term" value="P:mitochondrial genome maintenance"/>
    <property type="evidence" value="ECO:0000318"/>
    <property type="project" value="GO_Central"/>
</dbReference>
<dbReference type="GO" id="GO:1990519">
    <property type="term" value="P:pyrimidine nucleotide import into mitochondrion"/>
    <property type="evidence" value="ECO:0000318"/>
    <property type="project" value="GO_Central"/>
</dbReference>
<dbReference type="GO" id="GO:0051881">
    <property type="term" value="P:regulation of mitochondrial membrane potential"/>
    <property type="evidence" value="ECO:0007669"/>
    <property type="project" value="Ensembl"/>
</dbReference>
<dbReference type="FunFam" id="1.50.40.10:FF:000074">
    <property type="entry name" value="Solute carrier family 25 member 36"/>
    <property type="match status" value="1"/>
</dbReference>
<dbReference type="FunFam" id="1.50.40.10:FF:000124">
    <property type="entry name" value="Solute carrier family 25 member 36"/>
    <property type="match status" value="1"/>
</dbReference>
<dbReference type="Gene3D" id="1.50.40.10">
    <property type="entry name" value="Mitochondrial carrier domain"/>
    <property type="match status" value="2"/>
</dbReference>
<dbReference type="InterPro" id="IPR002067">
    <property type="entry name" value="Mit_carrier"/>
</dbReference>
<dbReference type="InterPro" id="IPR018108">
    <property type="entry name" value="Mitochondrial_sb/sol_carrier"/>
</dbReference>
<dbReference type="InterPro" id="IPR023395">
    <property type="entry name" value="Mt_carrier_dom_sf"/>
</dbReference>
<dbReference type="InterPro" id="IPR049562">
    <property type="entry name" value="SLC25A33/36-like"/>
</dbReference>
<dbReference type="PANTHER" id="PTHR45829">
    <property type="entry name" value="MITOCHONDRIAL CARRIER PROTEIN RIM2"/>
    <property type="match status" value="1"/>
</dbReference>
<dbReference type="PANTHER" id="PTHR45829:SF2">
    <property type="entry name" value="SOLUTE CARRIER FAMILY 25 MEMBER 36"/>
    <property type="match status" value="1"/>
</dbReference>
<dbReference type="Pfam" id="PF00153">
    <property type="entry name" value="Mito_carr"/>
    <property type="match status" value="3"/>
</dbReference>
<dbReference type="PRINTS" id="PR00926">
    <property type="entry name" value="MITOCARRIER"/>
</dbReference>
<dbReference type="SUPFAM" id="SSF103506">
    <property type="entry name" value="Mitochondrial carrier"/>
    <property type="match status" value="1"/>
</dbReference>
<dbReference type="PROSITE" id="PS50920">
    <property type="entry name" value="SOLCAR"/>
    <property type="match status" value="3"/>
</dbReference>